<keyword id="KW-0025">Alternative splicing</keyword>
<keyword id="KW-0143">Chaperone</keyword>
<keyword id="KW-0175">Coiled coil</keyword>
<keyword id="KW-0963">Cytoplasm</keyword>
<keyword id="KW-0449">Lipoprotein</keyword>
<keyword id="KW-0488">Methylation</keyword>
<keyword id="KW-0539">Nucleus</keyword>
<keyword id="KW-0597">Phosphoprotein</keyword>
<keyword id="KW-0636">Prenylation</keyword>
<keyword id="KW-1185">Reference proteome</keyword>
<proteinExistence type="evidence at protein level"/>
<reference key="1">
    <citation type="journal article" date="1999" name="Nature">
        <title>Sequence and analysis of chromosome 2 of the plant Arabidopsis thaliana.</title>
        <authorList>
            <person name="Lin X."/>
            <person name="Kaul S."/>
            <person name="Rounsley S.D."/>
            <person name="Shea T.P."/>
            <person name="Benito M.-I."/>
            <person name="Town C.D."/>
            <person name="Fujii C.Y."/>
            <person name="Mason T.M."/>
            <person name="Bowman C.L."/>
            <person name="Barnstead M.E."/>
            <person name="Feldblyum T.V."/>
            <person name="Buell C.R."/>
            <person name="Ketchum K.A."/>
            <person name="Lee J.J."/>
            <person name="Ronning C.M."/>
            <person name="Koo H.L."/>
            <person name="Moffat K.S."/>
            <person name="Cronin L.A."/>
            <person name="Shen M."/>
            <person name="Pai G."/>
            <person name="Van Aken S."/>
            <person name="Umayam L."/>
            <person name="Tallon L.J."/>
            <person name="Gill J.E."/>
            <person name="Adams M.D."/>
            <person name="Carrera A.J."/>
            <person name="Creasy T.H."/>
            <person name="Goodman H.M."/>
            <person name="Somerville C.R."/>
            <person name="Copenhaver G.P."/>
            <person name="Preuss D."/>
            <person name="Nierman W.C."/>
            <person name="White O."/>
            <person name="Eisen J.A."/>
            <person name="Salzberg S.L."/>
            <person name="Fraser C.M."/>
            <person name="Venter J.C."/>
        </authorList>
    </citation>
    <scope>NUCLEOTIDE SEQUENCE [LARGE SCALE GENOMIC DNA]</scope>
    <source>
        <strain>cv. Columbia</strain>
    </source>
</reference>
<reference key="2">
    <citation type="journal article" date="2017" name="Plant J.">
        <title>Araport11: a complete reannotation of the Arabidopsis thaliana reference genome.</title>
        <authorList>
            <person name="Cheng C.Y."/>
            <person name="Krishnakumar V."/>
            <person name="Chan A.P."/>
            <person name="Thibaud-Nissen F."/>
            <person name="Schobel S."/>
            <person name="Town C.D."/>
        </authorList>
    </citation>
    <scope>GENOME REANNOTATION</scope>
    <source>
        <strain>cv. Columbia</strain>
    </source>
</reference>
<reference key="3">
    <citation type="journal article" date="2003" name="Science">
        <title>Empirical analysis of transcriptional activity in the Arabidopsis genome.</title>
        <authorList>
            <person name="Yamada K."/>
            <person name="Lim J."/>
            <person name="Dale J.M."/>
            <person name="Chen H."/>
            <person name="Shinn P."/>
            <person name="Palm C.J."/>
            <person name="Southwick A.M."/>
            <person name="Wu H.C."/>
            <person name="Kim C.J."/>
            <person name="Nguyen M."/>
            <person name="Pham P.K."/>
            <person name="Cheuk R.F."/>
            <person name="Karlin-Newmann G."/>
            <person name="Liu S.X."/>
            <person name="Lam B."/>
            <person name="Sakano H."/>
            <person name="Wu T."/>
            <person name="Yu G."/>
            <person name="Miranda M."/>
            <person name="Quach H.L."/>
            <person name="Tripp M."/>
            <person name="Chang C.H."/>
            <person name="Lee J.M."/>
            <person name="Toriumi M.J."/>
            <person name="Chan M.M."/>
            <person name="Tang C.C."/>
            <person name="Onodera C.S."/>
            <person name="Deng J.M."/>
            <person name="Akiyama K."/>
            <person name="Ansari Y."/>
            <person name="Arakawa T."/>
            <person name="Banh J."/>
            <person name="Banno F."/>
            <person name="Bowser L."/>
            <person name="Brooks S.Y."/>
            <person name="Carninci P."/>
            <person name="Chao Q."/>
            <person name="Choy N."/>
            <person name="Enju A."/>
            <person name="Goldsmith A.D."/>
            <person name="Gurjal M."/>
            <person name="Hansen N.F."/>
            <person name="Hayashizaki Y."/>
            <person name="Johnson-Hopson C."/>
            <person name="Hsuan V.W."/>
            <person name="Iida K."/>
            <person name="Karnes M."/>
            <person name="Khan S."/>
            <person name="Koesema E."/>
            <person name="Ishida J."/>
            <person name="Jiang P.X."/>
            <person name="Jones T."/>
            <person name="Kawai J."/>
            <person name="Kamiya A."/>
            <person name="Meyers C."/>
            <person name="Nakajima M."/>
            <person name="Narusaka M."/>
            <person name="Seki M."/>
            <person name="Sakurai T."/>
            <person name="Satou M."/>
            <person name="Tamse R."/>
            <person name="Vaysberg M."/>
            <person name="Wallender E.K."/>
            <person name="Wong C."/>
            <person name="Yamamura Y."/>
            <person name="Yuan S."/>
            <person name="Shinozaki K."/>
            <person name="Davis R.W."/>
            <person name="Theologis A."/>
            <person name="Ecker J.R."/>
        </authorList>
    </citation>
    <scope>NUCLEOTIDE SEQUENCE [LARGE SCALE MRNA]</scope>
    <source>
        <strain>cv. Columbia</strain>
    </source>
</reference>
<reference key="4">
    <citation type="journal article" date="2009" name="DNA Res.">
        <title>Analysis of multiple occurrences of alternative splicing events in Arabidopsis thaliana using novel sequenced full-length cDNAs.</title>
        <authorList>
            <person name="Iida K."/>
            <person name="Fukami-Kobayashi K."/>
            <person name="Toyoda A."/>
            <person name="Sakaki Y."/>
            <person name="Kobayashi M."/>
            <person name="Seki M."/>
            <person name="Shinozaki K."/>
        </authorList>
    </citation>
    <scope>NUCLEOTIDE SEQUENCE [LARGE SCALE MRNA] OF 1-227</scope>
    <source>
        <strain>cv. Columbia</strain>
        <tissue>Rosette leaf</tissue>
    </source>
</reference>
<reference key="5">
    <citation type="journal article" date="2006" name="Plant Cell">
        <title>Arabidopsis NRP1 and NRP2 encode histone chaperones and are required for maintaining postembryonic root growth.</title>
        <authorList>
            <person name="Zhu Y."/>
            <person name="Dong A."/>
            <person name="Meyer D."/>
            <person name="Pichon O."/>
            <person name="Renou J.P."/>
            <person name="Cao K."/>
            <person name="Shen W.H."/>
        </authorList>
    </citation>
    <scope>TISSUE SPECIFICITY</scope>
</reference>
<reference key="6">
    <citation type="journal article" date="2007" name="Mol. Cell. Proteomics">
        <title>Multidimensional protein identification technology (MudPIT) analysis of ubiquitinated proteins in plants.</title>
        <authorList>
            <person name="Maor R."/>
            <person name="Jones A."/>
            <person name="Nuehse T.S."/>
            <person name="Studholme D.J."/>
            <person name="Peck S.C."/>
            <person name="Shirasu K."/>
        </authorList>
    </citation>
    <scope>IDENTIFICATION BY MASS SPECTROMETRY [LARGE SCALE ANALYSIS]</scope>
    <source>
        <strain>cv. Landsberg erecta</strain>
    </source>
</reference>
<reference key="7">
    <citation type="journal article" date="2009" name="J. Proteomics">
        <title>Phosphoproteomic analysis of nuclei-enriched fractions from Arabidopsis thaliana.</title>
        <authorList>
            <person name="Jones A.M.E."/>
            <person name="MacLean D."/>
            <person name="Studholme D.J."/>
            <person name="Serna-Sanz A."/>
            <person name="Andreasson E."/>
            <person name="Rathjen J.P."/>
            <person name="Peck S.C."/>
        </authorList>
    </citation>
    <scope>PHOSPHORYLATION [LARGE SCALE ANALYSIS] AT SER-41</scope>
    <scope>IDENTIFICATION BY MASS SPECTROMETRY [LARGE SCALE ANALYSIS]</scope>
    <source>
        <strain>cv. Columbia</strain>
    </source>
</reference>
<reference key="8">
    <citation type="journal article" date="2009" name="Mol. Plant">
        <title>A truncated Arabidopsis NUCLEOSOME ASSEMBLY PROTEIN 1, AtNAP1;3T, alters plant growth responses to abscisic acid and salt in the Atnap1;3-2 mutant.</title>
        <authorList>
            <person name="Liu Z.Q."/>
            <person name="Gao J."/>
            <person name="Dong A.W."/>
            <person name="Shen W.H."/>
        </authorList>
    </citation>
    <scope>DISRUPTION PHENOTYPE</scope>
</reference>
<reference key="9">
    <citation type="journal article" date="2009" name="Plant J.">
        <title>Molecular and reverse genetic characterization of NUCLEOSOME ASSEMBLY PROTEIN1 (NAP1) genes unravels their function in transcription and nucleotide excision repair in Arabidopsis thaliana.</title>
        <authorList>
            <person name="Liu Z."/>
            <person name="Zhu Y."/>
            <person name="Gao J."/>
            <person name="Yu F."/>
            <person name="Dong A."/>
            <person name="Shen W.H."/>
        </authorList>
    </citation>
    <scope>GENE FAMILY</scope>
    <scope>SUBUNIT</scope>
    <scope>SUBCELLULAR LOCATION</scope>
    <scope>DISRUPTION PHENOTYPE</scope>
    <scope>FUNCTION</scope>
    <scope>INTERACTION WITH HISTONE H2A</scope>
</reference>
<reference key="10">
    <citation type="journal article" date="2011" name="Plant Physiol. Biochem.">
        <title>Characterization of brassinosteroid-regulated proteins in a nuclear-enriched fraction of Arabidopsis suspension-cultured cells.</title>
        <authorList>
            <person name="Shigeta T."/>
            <person name="Yasuda D."/>
            <person name="Mori T."/>
            <person name="Yoshimitsu Y."/>
            <person name="Nakamura Y."/>
            <person name="Yoshida S."/>
            <person name="Asami T."/>
            <person name="Okamoto S."/>
            <person name="Matsuo T."/>
        </authorList>
    </citation>
    <scope>INDUCTION</scope>
    <scope>IDENTIFICATION BY MASS SPECTROMETRY</scope>
</reference>
<reference key="11">
    <citation type="journal article" date="2012" name="Plant Cell">
        <title>NAP1 family histone chaperones are required for somatic homologous recombination in Arabidopsis.</title>
        <authorList>
            <person name="Gao J."/>
            <person name="Zhu Y."/>
            <person name="Zhou W."/>
            <person name="Molinier J."/>
            <person name="Dong A."/>
            <person name="Shen W.H."/>
        </authorList>
    </citation>
    <scope>DISRUPTION PHENOTYPE</scope>
    <scope>FUNCTION</scope>
</reference>
<comment type="function">
    <text evidence="1 6 9">May modulate chromatin structure by regulation of nucleosome assembly/disassembly (By similarity). May function in nucleotide excision repair (NER). Involved in somatic homologous recombination.</text>
</comment>
<comment type="subunit">
    <text evidence="6">Can form homomeric and heteromeric protein complexes with NAP1;1, NAP1;3 and NAP1;4. Binds histone H2A.</text>
</comment>
<comment type="interaction">
    <interactant intactId="EBI-1997989">
        <id>Q9ZUP3</id>
    </interactant>
    <interactant intactId="EBI-4424361">
        <id>Q9SZI2</id>
        <label>NAP1;1</label>
    </interactant>
    <organismsDiffer>false</organismsDiffer>
    <experiments>4</experiments>
</comment>
<comment type="interaction">
    <interactant intactId="EBI-1997989">
        <id>Q9ZUP3</id>
    </interactant>
    <interactant intactId="EBI-1997989">
        <id>Q9ZUP3</id>
        <label>NAP1;2</label>
    </interactant>
    <organismsDiffer>false</organismsDiffer>
    <experiments>2</experiments>
</comment>
<comment type="interaction">
    <interactant intactId="EBI-1997989">
        <id>Q9ZUP3</id>
    </interactant>
    <interactant intactId="EBI-4430887">
        <id>Q94K07</id>
        <label>NAP1;3</label>
    </interactant>
    <organismsDiffer>false</organismsDiffer>
    <experiments>5</experiments>
</comment>
<comment type="interaction">
    <interactant intactId="EBI-1997989">
        <id>Q9ZUP3</id>
    </interactant>
    <interactant intactId="EBI-6913300">
        <id>F4JEI8</id>
        <label>NAP1;4</label>
    </interactant>
    <organismsDiffer>false</organismsDiffer>
    <experiments>3</experiments>
</comment>
<comment type="subcellular location">
    <subcellularLocation>
        <location evidence="1">Nucleus</location>
    </subcellularLocation>
    <subcellularLocation>
        <location evidence="6">Cytoplasm</location>
    </subcellularLocation>
    <text>Predominantly located in cytoplasm.</text>
</comment>
<comment type="alternative products">
    <event type="alternative splicing"/>
    <isoform>
        <id>Q9ZUP3-1</id>
        <name>1</name>
        <sequence type="displayed"/>
    </isoform>
    <text>A number of isoforms are produced. According to EST sequences.</text>
</comment>
<comment type="tissue specificity">
    <text evidence="5">Ubiquitous.</text>
</comment>
<comment type="induction">
    <text evidence="8">By brassinosteroids.</text>
</comment>
<comment type="domain">
    <text>The acidic domain is probably involved in the interaction with histones.</text>
</comment>
<comment type="disruption phenotype">
    <text evidence="6 7 9">No visible phenotype.</text>
</comment>
<comment type="miscellaneous">
    <text evidence="11 12 13">Triple mutant nap1;1-nap1;2-nap1;3 has no obvious visible phenotype but exhibits hypersensitivity to DNA damage after UV-radiation, affected transcription of NER related genes (PubMed:19228338), slight hypersensitive response to abscisic acid (ABA) in seedling growth (PubMed:19825649) and impaired somatic homologous recombination (PubMed:22534127).</text>
</comment>
<comment type="similarity">
    <text evidence="10">Belongs to the nucleosome assembly protein (NAP) family.</text>
</comment>
<feature type="chain" id="PRO_0000423678" description="Nucleosome assembly protein 1;2">
    <location>
        <begin position="1"/>
        <end position="376"/>
    </location>
</feature>
<feature type="propeptide" id="PRO_0000423679" description="Removed in mature form" evidence="2">
    <location>
        <begin position="377"/>
        <end position="379"/>
    </location>
</feature>
<feature type="region of interest" description="Disordered" evidence="4">
    <location>
        <begin position="298"/>
        <end position="379"/>
    </location>
</feature>
<feature type="coiled-coil region" evidence="3">
    <location>
        <begin position="26"/>
        <end position="80"/>
    </location>
</feature>
<feature type="short sequence motif" description="Nuclear export signal" evidence="3">
    <location>
        <begin position="47"/>
        <end position="62"/>
    </location>
</feature>
<feature type="short sequence motif" description="Nuclear localization signal" evidence="3">
    <location>
        <begin position="222"/>
        <end position="227"/>
    </location>
</feature>
<feature type="compositionally biased region" description="Acidic residues" evidence="4">
    <location>
        <begin position="299"/>
        <end position="342"/>
    </location>
</feature>
<feature type="compositionally biased region" description="Basic residues" evidence="4">
    <location>
        <begin position="347"/>
        <end position="360"/>
    </location>
</feature>
<feature type="modified residue" description="Phosphoserine" evidence="14">
    <location>
        <position position="41"/>
    </location>
</feature>
<feature type="modified residue" description="Cysteine methyl ester" evidence="2">
    <location>
        <position position="376"/>
    </location>
</feature>
<feature type="lipid moiety-binding region" description="S-farnesyl cysteine" evidence="2">
    <location>
        <position position="376"/>
    </location>
</feature>
<dbReference type="EMBL" id="AC005917">
    <property type="protein sequence ID" value="AAD10147.1"/>
    <property type="molecule type" value="Genomic_DNA"/>
</dbReference>
<dbReference type="EMBL" id="CP002685">
    <property type="protein sequence ID" value="AEC06885.1"/>
    <property type="molecule type" value="Genomic_DNA"/>
</dbReference>
<dbReference type="EMBL" id="AY099771">
    <property type="protein sequence ID" value="AAM20622.1"/>
    <property type="molecule type" value="mRNA"/>
</dbReference>
<dbReference type="EMBL" id="BT002602">
    <property type="protein sequence ID" value="AAO00962.1"/>
    <property type="molecule type" value="mRNA"/>
</dbReference>
<dbReference type="EMBL" id="AK316769">
    <property type="protein sequence ID" value="BAH19489.1"/>
    <property type="molecule type" value="mRNA"/>
</dbReference>
<dbReference type="PIR" id="C84577">
    <property type="entry name" value="C84577"/>
</dbReference>
<dbReference type="RefSeq" id="NP_179538.1">
    <molecule id="Q9ZUP3-1"/>
    <property type="nucleotide sequence ID" value="NM_127506.5"/>
</dbReference>
<dbReference type="SMR" id="Q9ZUP3"/>
<dbReference type="BioGRID" id="1822">
    <property type="interactions" value="25"/>
</dbReference>
<dbReference type="FunCoup" id="Q9ZUP3">
    <property type="interactions" value="3563"/>
</dbReference>
<dbReference type="IntAct" id="Q9ZUP3">
    <property type="interactions" value="6"/>
</dbReference>
<dbReference type="STRING" id="3702.Q9ZUP3"/>
<dbReference type="iPTMnet" id="Q9ZUP3"/>
<dbReference type="MetOSite" id="Q9ZUP3"/>
<dbReference type="PaxDb" id="3702-AT2G19480.1"/>
<dbReference type="EnsemblPlants" id="AT2G19480.1">
    <molecule id="Q9ZUP3-1"/>
    <property type="protein sequence ID" value="AT2G19480.1"/>
    <property type="gene ID" value="AT2G19480"/>
</dbReference>
<dbReference type="GeneID" id="816467"/>
<dbReference type="Gramene" id="AT2G19480.1">
    <molecule id="Q9ZUP3-1"/>
    <property type="protein sequence ID" value="AT2G19480.1"/>
    <property type="gene ID" value="AT2G19480"/>
</dbReference>
<dbReference type="KEGG" id="ath:AT2G19480"/>
<dbReference type="Araport" id="AT2G19480"/>
<dbReference type="TAIR" id="AT2G19480">
    <property type="gene designation" value="NAP1"/>
</dbReference>
<dbReference type="eggNOG" id="KOG1507">
    <property type="taxonomic scope" value="Eukaryota"/>
</dbReference>
<dbReference type="InParanoid" id="Q9ZUP3"/>
<dbReference type="PhylomeDB" id="Q9ZUP3"/>
<dbReference type="PRO" id="PR:Q9ZUP3"/>
<dbReference type="Proteomes" id="UP000006548">
    <property type="component" value="Chromosome 2"/>
</dbReference>
<dbReference type="ExpressionAtlas" id="Q9ZUP3">
    <property type="expression patterns" value="baseline and differential"/>
</dbReference>
<dbReference type="GO" id="GO:0005737">
    <property type="term" value="C:cytoplasm"/>
    <property type="evidence" value="ECO:0000314"/>
    <property type="project" value="TAIR"/>
</dbReference>
<dbReference type="GO" id="GO:0005829">
    <property type="term" value="C:cytosol"/>
    <property type="evidence" value="ECO:0007005"/>
    <property type="project" value="TAIR"/>
</dbReference>
<dbReference type="GO" id="GO:0005739">
    <property type="term" value="C:mitochondrion"/>
    <property type="evidence" value="ECO:0007005"/>
    <property type="project" value="TAIR"/>
</dbReference>
<dbReference type="GO" id="GO:0005634">
    <property type="term" value="C:nucleus"/>
    <property type="evidence" value="ECO:0000314"/>
    <property type="project" value="TAIR"/>
</dbReference>
<dbReference type="GO" id="GO:0042393">
    <property type="term" value="F:histone binding"/>
    <property type="evidence" value="ECO:0000314"/>
    <property type="project" value="UniProtKB"/>
</dbReference>
<dbReference type="GO" id="GO:0042802">
    <property type="term" value="F:identical protein binding"/>
    <property type="evidence" value="ECO:0000353"/>
    <property type="project" value="IntAct"/>
</dbReference>
<dbReference type="GO" id="GO:0006281">
    <property type="term" value="P:DNA repair"/>
    <property type="evidence" value="ECO:0000316"/>
    <property type="project" value="TAIR"/>
</dbReference>
<dbReference type="GO" id="GO:0009294">
    <property type="term" value="P:DNA-mediated transformation"/>
    <property type="evidence" value="ECO:0000315"/>
    <property type="project" value="TAIR"/>
</dbReference>
<dbReference type="GO" id="GO:0000724">
    <property type="term" value="P:double-strand break repair via homologous recombination"/>
    <property type="evidence" value="ECO:0000316"/>
    <property type="project" value="TAIR"/>
</dbReference>
<dbReference type="GO" id="GO:0006334">
    <property type="term" value="P:nucleosome assembly"/>
    <property type="evidence" value="ECO:0007669"/>
    <property type="project" value="InterPro"/>
</dbReference>
<dbReference type="GO" id="GO:0016444">
    <property type="term" value="P:somatic cell DNA recombination"/>
    <property type="evidence" value="ECO:0000315"/>
    <property type="project" value="UniProtKB"/>
</dbReference>
<dbReference type="FunFam" id="1.20.5.1500:FF:000001">
    <property type="entry name" value="Nucleosome assembly protein 1-like 1"/>
    <property type="match status" value="1"/>
</dbReference>
<dbReference type="FunFam" id="3.30.1120.90:FF:000005">
    <property type="entry name" value="Nucleosome assembly protein11"/>
    <property type="match status" value="1"/>
</dbReference>
<dbReference type="Gene3D" id="1.20.5.1500">
    <property type="match status" value="1"/>
</dbReference>
<dbReference type="Gene3D" id="3.30.1120.90">
    <property type="entry name" value="Nucleosome assembly protein"/>
    <property type="match status" value="1"/>
</dbReference>
<dbReference type="InterPro" id="IPR037231">
    <property type="entry name" value="NAP-like_sf"/>
</dbReference>
<dbReference type="InterPro" id="IPR002164">
    <property type="entry name" value="NAP_family"/>
</dbReference>
<dbReference type="PANTHER" id="PTHR11875">
    <property type="entry name" value="TESTIS-SPECIFIC Y-ENCODED PROTEIN"/>
    <property type="match status" value="1"/>
</dbReference>
<dbReference type="Pfam" id="PF00956">
    <property type="entry name" value="NAP"/>
    <property type="match status" value="1"/>
</dbReference>
<dbReference type="SUPFAM" id="SSF143113">
    <property type="entry name" value="NAP-like"/>
    <property type="match status" value="1"/>
</dbReference>
<name>NAP1B_ARATH</name>
<gene>
    <name type="primary">NAP1;2</name>
    <name type="synonym">NFA2</name>
    <name type="ordered locus">At2g19480</name>
    <name type="ORF">F3P11.8</name>
</gene>
<accession>Q9ZUP3</accession>
<accession>B9DFH2</accession>
<organism>
    <name type="scientific">Arabidopsis thaliana</name>
    <name type="common">Mouse-ear cress</name>
    <dbReference type="NCBI Taxonomy" id="3702"/>
    <lineage>
        <taxon>Eukaryota</taxon>
        <taxon>Viridiplantae</taxon>
        <taxon>Streptophyta</taxon>
        <taxon>Embryophyta</taxon>
        <taxon>Tracheophyta</taxon>
        <taxon>Spermatophyta</taxon>
        <taxon>Magnoliopsida</taxon>
        <taxon>eudicotyledons</taxon>
        <taxon>Gunneridae</taxon>
        <taxon>Pentapetalae</taxon>
        <taxon>rosids</taxon>
        <taxon>malvids</taxon>
        <taxon>Brassicales</taxon>
        <taxon>Brassicaceae</taxon>
        <taxon>Camelineae</taxon>
        <taxon>Arabidopsis</taxon>
    </lineage>
</organism>
<protein>
    <recommendedName>
        <fullName>Nucleosome assembly protein 1;2</fullName>
        <shortName>AtNAP1;2</shortName>
    </recommendedName>
    <alternativeName>
        <fullName>Nucleosome/chromatin assembly factor group A2</fullName>
    </alternativeName>
</protein>
<evidence type="ECO:0000250" key="1"/>
<evidence type="ECO:0000250" key="2">
    <source>
        <dbReference type="UniProtKB" id="Q9SZI2"/>
    </source>
</evidence>
<evidence type="ECO:0000255" key="3"/>
<evidence type="ECO:0000256" key="4">
    <source>
        <dbReference type="SAM" id="MobiDB-lite"/>
    </source>
</evidence>
<evidence type="ECO:0000269" key="5">
    <source>
    </source>
</evidence>
<evidence type="ECO:0000269" key="6">
    <source>
    </source>
</evidence>
<evidence type="ECO:0000269" key="7">
    <source>
    </source>
</evidence>
<evidence type="ECO:0000269" key="8">
    <source>
    </source>
</evidence>
<evidence type="ECO:0000269" key="9">
    <source>
    </source>
</evidence>
<evidence type="ECO:0000305" key="10"/>
<evidence type="ECO:0000305" key="11">
    <source>
    </source>
</evidence>
<evidence type="ECO:0000305" key="12">
    <source>
    </source>
</evidence>
<evidence type="ECO:0000305" key="13">
    <source>
    </source>
</evidence>
<evidence type="ECO:0007744" key="14">
    <source>
    </source>
</evidence>
<sequence length="379" mass="43543">MSNDKDSMNMSDLSTALNEEDRAGLVNALKNKLQNLAGQHSDVLENLTPPVRKRVEFLREIQNQYDEMEAKFFEERAALEAKYQKLYQPLYTKRYEIVNGVVEVEGAAEEVKSEQGEDKSAEEKGVPDFWLIALKNNEITAEEITERDEGALKYLKDIKWSRVEEPKGFKLEFFFDQNPYFKNTVLTKTYHMIDEDEPILEKALGTEIEWYPGKCLTQKILKKKPKKGSKNTKPITKTEDCESFFNFFSPPQVPDDDEDLDDDMADELQGQMEHDYDIGSTIKEKIISHAVSWFTGEAVEADDLDIEDDDDEIDEDDDEEDEEDDEDDEEEDDEDDDEEEEADQGKKSKKKSSAGHKKAGRSQLAEGQAGERPPECKQQ</sequence>